<protein>
    <recommendedName>
        <fullName>ATP-dependent 6-phosphofructokinase subunit gamma</fullName>
    </recommendedName>
    <alternativeName>
        <fullName>ATP-dependent 6-phosphofructokinase</fullName>
        <shortName>ATP-PFK</shortName>
        <shortName>Phosphofructokinase 3</shortName>
    </alternativeName>
    <alternativeName>
        <fullName>Phosphohexokinase</fullName>
    </alternativeName>
</protein>
<gene>
    <name type="primary">PFK3</name>
</gene>
<evidence type="ECO:0000269" key="1">
    <source>
    </source>
</evidence>
<evidence type="ECO:0000269" key="2">
    <source>
    </source>
</evidence>
<evidence type="ECO:0000269" key="3">
    <source>
    </source>
</evidence>
<evidence type="ECO:0000305" key="4"/>
<evidence type="ECO:0007829" key="5">
    <source>
        <dbReference type="PDB" id="3OPY"/>
    </source>
</evidence>
<comment type="function">
    <text evidence="2">Structural subunit of pyrophosphate--fructose 6-phosphate 1-phosphotransferase. Not required for catalytic activity. Fine-tunes allosteric regulation of the ATP-PFK by ATP, fructose 2,6-bisphosphate and AMP.</text>
</comment>
<comment type="pathway">
    <text>Carbohydrate degradation; glycolysis; D-glyceraldehyde 3-phosphate and glycerone phosphate from D-glucose: step 3/4.</text>
</comment>
<comment type="subunit">
    <text evidence="1 2 3">Heterododecamer of 4 alpha, 4 beta and 4 gamma chains. The gamma chain bridges the N-terminal halves of the alpha and beta subunits.</text>
</comment>
<comment type="subcellular location">
    <subcellularLocation>
        <location evidence="2">Cytoplasm</location>
    </subcellularLocation>
</comment>
<comment type="miscellaneous">
    <text>This subunit is only found in some Pichia species.</text>
</comment>
<sequence>MVTKDSIIRDLERENVGPEFGEFLNTLQTDLNSEKPPIEQVKSQLETHFNLAHETQEFSRKNDNAPVDKLLTNYYNNYEVNVLEFVLQMGFSRDLSIPLNVWFVLDMISQLSTSKQDLPLDYYLVLNNSQTGKYSDFVRYLIYEAVGAEIHCFEQGSMPEQYRSSRWEDKVKGPALANRGPIRGNVGAGDRKITFHLLCKKTARMILVGDDRETDFEMSDRSFVTLLLDYYQRVGTTKKIDLLLLTNNFDTNMNNKLQQLKILESLNMLKSNCYVLDYQITVDQVTANFNSYVEGIPAFRRHEIANFLKKRKTPKNADELIFKYVGRWNICYQKKFHQGNISIHQISGYLD</sequence>
<name>PFKA3_PICPA</name>
<organism>
    <name type="scientific">Komagataella pastoris</name>
    <name type="common">Yeast</name>
    <name type="synonym">Pichia pastoris</name>
    <dbReference type="NCBI Taxonomy" id="4922"/>
    <lineage>
        <taxon>Eukaryota</taxon>
        <taxon>Fungi</taxon>
        <taxon>Dikarya</taxon>
        <taxon>Ascomycota</taxon>
        <taxon>Saccharomycotina</taxon>
        <taxon>Pichiomycetes</taxon>
        <taxon>Pichiales</taxon>
        <taxon>Pichiaceae</taxon>
        <taxon>Komagataella</taxon>
    </lineage>
</organism>
<reference key="1">
    <citation type="journal article" date="2007" name="J. Biol. Chem.">
        <title>A novel form of 6-phosphofructokinase. Identification and functional relevance of a third type of subunit in Pichia pastoris.</title>
        <authorList>
            <person name="Tanneberger K."/>
            <person name="Kirchberger J."/>
            <person name="Baer J."/>
            <person name="Schellenberger W."/>
            <person name="Rothemund S."/>
            <person name="Kamprad M."/>
            <person name="Otto H."/>
            <person name="Schoeneberg T."/>
            <person name="Edelmann A."/>
        </authorList>
    </citation>
    <scope>NUCLEOTIDE SEQUENCE [GENOMIC DNA]</scope>
    <scope>PROTEIN SEQUENCE OF 2-33; 134-139; 163-177 AND 222-233</scope>
    <scope>FUNCTION</scope>
    <scope>SUBUNIT</scope>
    <scope>SUBCELLULAR LOCATION</scope>
    <source>
        <strain>MH458</strain>
    </source>
</reference>
<reference key="2">
    <citation type="journal article" date="2002" name="Yeast">
        <title>6-phosphofructokinase from Pichia pastoris: purification, kinetic and molecular characterization of the enzyme.</title>
        <authorList>
            <person name="Kirchberger J."/>
            <person name="Baer J."/>
            <person name="Schellenberger W."/>
            <person name="Dihazi H."/>
            <person name="Kopperschlaeger G."/>
        </authorList>
    </citation>
    <scope>PARTIAL PROTEIN SEQUENCE OF 2-21</scope>
    <scope>SUBUNIT</scope>
    <source>
        <strain>ATCC 28485 / BCRC 21531 / CBS 704 / DSM 70382 / JCM 3650 / NBRC 10777 / NRRLY-1603</strain>
    </source>
</reference>
<reference key="3">
    <citation type="journal article" date="2009" name="J. Struct. Biol.">
        <title>3D structure of phosphofructokinase from Pichia pastoris: Localization of the novel gamma-subunits.</title>
        <authorList>
            <person name="Benjamin S."/>
            <person name="Radermacher M."/>
            <person name="Kirchberger J."/>
            <person name="Schoeneberg T."/>
            <person name="Edelmann A."/>
            <person name="Ruiz T."/>
        </authorList>
    </citation>
    <scope>STRUCTURE BY ELECTRON MICROSCOPY</scope>
    <scope>SUBUNIT</scope>
</reference>
<reference key="4">
    <citation type="journal article" date="2011" name="FASEB J.">
        <title>Molecular architecture and structural basis of allosteric regulation of eukaryotic phosphofructokinases.</title>
        <authorList>
            <person name="Straeter N."/>
            <person name="Marek S."/>
            <person name="Kuettner E.B."/>
            <person name="Kloos M."/>
            <person name="Keim A."/>
            <person name="Brueser A."/>
            <person name="Kirchberger J."/>
            <person name="Schoeneberg T."/>
        </authorList>
    </citation>
    <scope>X-RAY CRYSTALLOGRAPHY (3.05 ANGSTROMS)</scope>
</reference>
<feature type="initiator methionine" description="Removed" evidence="2">
    <location>
        <position position="1"/>
    </location>
</feature>
<feature type="chain" id="PRO_0000429725" description="ATP-dependent 6-phosphofructokinase subunit gamma">
    <location>
        <begin position="2"/>
        <end position="351"/>
    </location>
</feature>
<feature type="sequence conflict" description="In Ref. 1; AA sequence." evidence="4" ref="1">
    <original>G</original>
    <variation>F</variation>
    <location>
        <position position="21"/>
    </location>
</feature>
<feature type="helix" evidence="5">
    <location>
        <begin position="6"/>
        <end position="13"/>
    </location>
</feature>
<feature type="helix" evidence="5">
    <location>
        <begin position="18"/>
        <end position="26"/>
    </location>
</feature>
<feature type="strand" evidence="5">
    <location>
        <begin position="31"/>
        <end position="35"/>
    </location>
</feature>
<feature type="helix" evidence="5">
    <location>
        <begin position="37"/>
        <end position="49"/>
    </location>
</feature>
<feature type="helix" evidence="5">
    <location>
        <begin position="51"/>
        <end position="60"/>
    </location>
</feature>
<feature type="helix" evidence="5">
    <location>
        <begin position="67"/>
        <end position="69"/>
    </location>
</feature>
<feature type="helix" evidence="5">
    <location>
        <begin position="70"/>
        <end position="74"/>
    </location>
</feature>
<feature type="helix" evidence="5">
    <location>
        <begin position="77"/>
        <end position="82"/>
    </location>
</feature>
<feature type="strand" evidence="5">
    <location>
        <begin position="85"/>
        <end position="89"/>
    </location>
</feature>
<feature type="helix" evidence="5">
    <location>
        <begin position="97"/>
        <end position="111"/>
    </location>
</feature>
<feature type="strand" evidence="5">
    <location>
        <begin position="115"/>
        <end position="117"/>
    </location>
</feature>
<feature type="strand" evidence="5">
    <location>
        <begin position="120"/>
        <end position="126"/>
    </location>
</feature>
<feature type="helix" evidence="5">
    <location>
        <begin position="129"/>
        <end position="132"/>
    </location>
</feature>
<feature type="helix" evidence="5">
    <location>
        <begin position="135"/>
        <end position="145"/>
    </location>
</feature>
<feature type="strand" evidence="5">
    <location>
        <begin position="178"/>
        <end position="180"/>
    </location>
</feature>
<feature type="strand" evidence="5">
    <location>
        <begin position="182"/>
        <end position="186"/>
    </location>
</feature>
<feature type="turn" evidence="5">
    <location>
        <begin position="187"/>
        <end position="190"/>
    </location>
</feature>
<feature type="strand" evidence="5">
    <location>
        <begin position="191"/>
        <end position="199"/>
    </location>
</feature>
<feature type="helix" evidence="5">
    <location>
        <begin position="200"/>
        <end position="207"/>
    </location>
</feature>
<feature type="turn" evidence="5">
    <location>
        <begin position="208"/>
        <end position="210"/>
    </location>
</feature>
<feature type="helix" evidence="5">
    <location>
        <begin position="220"/>
        <end position="233"/>
    </location>
</feature>
<feature type="strand" evidence="5">
    <location>
        <begin position="240"/>
        <end position="246"/>
    </location>
</feature>
<feature type="helix" evidence="5">
    <location>
        <begin position="251"/>
        <end position="254"/>
    </location>
</feature>
<feature type="helix" evidence="5">
    <location>
        <begin position="256"/>
        <end position="265"/>
    </location>
</feature>
<feature type="strand" evidence="5">
    <location>
        <begin position="269"/>
        <end position="278"/>
    </location>
</feature>
<feature type="helix" evidence="5">
    <location>
        <begin position="284"/>
        <end position="293"/>
    </location>
</feature>
<feature type="helix" evidence="5">
    <location>
        <begin position="297"/>
        <end position="311"/>
    </location>
</feature>
<feature type="helix" evidence="5">
    <location>
        <begin position="316"/>
        <end position="318"/>
    </location>
</feature>
<feature type="helix" evidence="5">
    <location>
        <begin position="320"/>
        <end position="323"/>
    </location>
</feature>
<feature type="strand" evidence="5">
    <location>
        <begin position="330"/>
        <end position="338"/>
    </location>
</feature>
<feature type="strand" evidence="5">
    <location>
        <begin position="341"/>
        <end position="349"/>
    </location>
</feature>
<dbReference type="EMBL" id="AY686600">
    <property type="protein sequence ID" value="AAU05772.1"/>
    <property type="molecule type" value="Genomic_DNA"/>
</dbReference>
<dbReference type="PDB" id="3OPY">
    <property type="method" value="X-ray"/>
    <property type="resolution" value="3.05 A"/>
    <property type="chains" value="I/J/K/L=1-351"/>
</dbReference>
<dbReference type="PDBsum" id="3OPY"/>
<dbReference type="SMR" id="A7MAS3"/>
<dbReference type="OrthoDB" id="10288091at2759"/>
<dbReference type="SABIO-RK" id="A7MAS3"/>
<dbReference type="UniPathway" id="UPA00109">
    <property type="reaction ID" value="UER00182"/>
</dbReference>
<dbReference type="GO" id="GO:0005737">
    <property type="term" value="C:cytoplasm"/>
    <property type="evidence" value="ECO:0007669"/>
    <property type="project" value="UniProtKB-SubCell"/>
</dbReference>
<dbReference type="GO" id="GO:0006096">
    <property type="term" value="P:glycolytic process"/>
    <property type="evidence" value="ECO:0007669"/>
    <property type="project" value="UniProtKB-UniPathway"/>
</dbReference>
<dbReference type="CDD" id="cd11687">
    <property type="entry name" value="PpPFK_gamma"/>
    <property type="match status" value="1"/>
</dbReference>
<dbReference type="Gene3D" id="3.40.50.11920">
    <property type="match status" value="1"/>
</dbReference>
<dbReference type="InterPro" id="IPR033785">
    <property type="entry name" value="PpPFK_gamma"/>
</dbReference>
<dbReference type="InterPro" id="IPR038615">
    <property type="entry name" value="PpPFK_gamma_sf"/>
</dbReference>
<dbReference type="Pfam" id="PF22457">
    <property type="entry name" value="PpPFK_gamma-like_C"/>
    <property type="match status" value="1"/>
</dbReference>
<keyword id="KW-0002">3D-structure</keyword>
<keyword id="KW-0963">Cytoplasm</keyword>
<keyword id="KW-0903">Direct protein sequencing</keyword>
<keyword id="KW-0324">Glycolysis</keyword>
<proteinExistence type="evidence at protein level"/>
<accession>A7MAS3</accession>